<evidence type="ECO:0000250" key="1"/>
<evidence type="ECO:0000250" key="2">
    <source>
        <dbReference type="UniProtKB" id="Q60670"/>
    </source>
</evidence>
<evidence type="ECO:0000250" key="3">
    <source>
        <dbReference type="UniProtKB" id="Q9R1U5"/>
    </source>
</evidence>
<evidence type="ECO:0000255" key="4">
    <source>
        <dbReference type="PROSITE-ProRule" id="PRU00159"/>
    </source>
</evidence>
<evidence type="ECO:0000255" key="5">
    <source>
        <dbReference type="PROSITE-ProRule" id="PRU00212"/>
    </source>
</evidence>
<evidence type="ECO:0000255" key="6">
    <source>
        <dbReference type="PROSITE-ProRule" id="PRU10027"/>
    </source>
</evidence>
<evidence type="ECO:0000256" key="7">
    <source>
        <dbReference type="SAM" id="MobiDB-lite"/>
    </source>
</evidence>
<evidence type="ECO:0000269" key="8">
    <source>
    </source>
</evidence>
<evidence type="ECO:0000269" key="9">
    <source>
    </source>
</evidence>
<evidence type="ECO:0000269" key="10">
    <source>
    </source>
</evidence>
<evidence type="ECO:0000269" key="11">
    <source>
    </source>
</evidence>
<evidence type="ECO:0000269" key="12">
    <source>
    </source>
</evidence>
<evidence type="ECO:0000269" key="13">
    <source>
    </source>
</evidence>
<evidence type="ECO:0000269" key="14">
    <source>
    </source>
</evidence>
<evidence type="ECO:0000269" key="15">
    <source>
    </source>
</evidence>
<evidence type="ECO:0000269" key="16">
    <source>
    </source>
</evidence>
<evidence type="ECO:0000305" key="17"/>
<evidence type="ECO:0000305" key="18">
    <source>
    </source>
</evidence>
<dbReference type="EC" id="2.7.11.1" evidence="9 13 16"/>
<dbReference type="EMBL" id="AB047786">
    <property type="protein sequence ID" value="BAD74070.1"/>
    <property type="molecule type" value="mRNA"/>
</dbReference>
<dbReference type="EMBL" id="AP001751">
    <property type="protein sequence ID" value="BAA95536.1"/>
    <property type="molecule type" value="Genomic_DNA"/>
</dbReference>
<dbReference type="EMBL" id="BC038504">
    <property type="protein sequence ID" value="AAH38504.1"/>
    <property type="molecule type" value="mRNA"/>
</dbReference>
<dbReference type="EMBL" id="AK131076">
    <property type="protein sequence ID" value="BAC85126.1"/>
    <property type="molecule type" value="mRNA"/>
</dbReference>
<dbReference type="CCDS" id="CCDS33575.1"/>
<dbReference type="RefSeq" id="NP_001307572.1">
    <property type="nucleotide sequence ID" value="NM_001320643.2"/>
</dbReference>
<dbReference type="RefSeq" id="NP_775490.2">
    <property type="nucleotide sequence ID" value="NM_173354.5"/>
</dbReference>
<dbReference type="SMR" id="P57059"/>
<dbReference type="BioGRID" id="127260">
    <property type="interactions" value="62"/>
</dbReference>
<dbReference type="BioGRID" id="3195539">
    <property type="interactions" value="6"/>
</dbReference>
<dbReference type="FunCoup" id="P57059">
    <property type="interactions" value="990"/>
</dbReference>
<dbReference type="IntAct" id="P57059">
    <property type="interactions" value="41"/>
</dbReference>
<dbReference type="MINT" id="P57059"/>
<dbReference type="STRING" id="9606.ENSP00000270162"/>
<dbReference type="BindingDB" id="P57059"/>
<dbReference type="ChEMBL" id="CHEMBL6082"/>
<dbReference type="DrugBank" id="DB08912">
    <property type="generic name" value="Dabrafenib"/>
</dbReference>
<dbReference type="DrugBank" id="DB12010">
    <property type="generic name" value="Fostamatinib"/>
</dbReference>
<dbReference type="DrugCentral" id="P57059"/>
<dbReference type="GuidetoPHARMACOLOGY" id="2197"/>
<dbReference type="TCDB" id="8.A.104.1.14">
    <property type="family name" value="the 5'-amp-activated protein kinase (ampk) family"/>
</dbReference>
<dbReference type="GlyGen" id="P57059">
    <property type="glycosylation" value="2 sites, 1 O-linked glycan (1 site)"/>
</dbReference>
<dbReference type="iPTMnet" id="P57059"/>
<dbReference type="PhosphoSitePlus" id="P57059"/>
<dbReference type="BioMuta" id="SIK1"/>
<dbReference type="DMDM" id="59803093"/>
<dbReference type="jPOST" id="P57059"/>
<dbReference type="MassIVE" id="P57059"/>
<dbReference type="PaxDb" id="9606-ENSP00000270162"/>
<dbReference type="PeptideAtlas" id="P57059"/>
<dbReference type="ProteomicsDB" id="56978"/>
<dbReference type="Antibodypedia" id="9946">
    <property type="antibodies" value="320 antibodies from 36 providers"/>
</dbReference>
<dbReference type="DNASU" id="150094"/>
<dbReference type="Ensembl" id="ENST00000270162.8">
    <property type="protein sequence ID" value="ENSP00000270162.6"/>
    <property type="gene ID" value="ENSG00000142178.9"/>
</dbReference>
<dbReference type="GeneID" id="102724428"/>
<dbReference type="GeneID" id="150094"/>
<dbReference type="KEGG" id="hsa:102724428"/>
<dbReference type="KEGG" id="hsa:150094"/>
<dbReference type="MANE-Select" id="ENST00000270162.8">
    <property type="protein sequence ID" value="ENSP00000270162.6"/>
    <property type="RefSeq nucleotide sequence ID" value="NM_173354.5"/>
    <property type="RefSeq protein sequence ID" value="NP_775490.2"/>
</dbReference>
<dbReference type="UCSC" id="uc002zdf.4">
    <property type="organism name" value="human"/>
</dbReference>
<dbReference type="AGR" id="HGNC:11142"/>
<dbReference type="CTD" id="150094"/>
<dbReference type="DisGeNET" id="102724428"/>
<dbReference type="DisGeNET" id="150094"/>
<dbReference type="GeneCards" id="SIK1"/>
<dbReference type="HGNC" id="HGNC:11142">
    <property type="gene designation" value="SIK1"/>
</dbReference>
<dbReference type="HPA" id="ENSG00000142178">
    <property type="expression patterns" value="Low tissue specificity"/>
</dbReference>
<dbReference type="MalaCards" id="SIK1"/>
<dbReference type="MIM" id="605705">
    <property type="type" value="gene"/>
</dbReference>
<dbReference type="MIM" id="616341">
    <property type="type" value="phenotype"/>
</dbReference>
<dbReference type="neXtProt" id="NX_P57059"/>
<dbReference type="OpenTargets" id="ENSG00000142178"/>
<dbReference type="Orphanet" id="1934">
    <property type="disease" value="Early infantile developmental and epileptic encephalopathy"/>
</dbReference>
<dbReference type="Orphanet" id="3451">
    <property type="disease" value="Infantile epileptic spasms syndrome"/>
</dbReference>
<dbReference type="PharmGKB" id="PA164725717"/>
<dbReference type="VEuPathDB" id="HostDB:ENSG00000142178"/>
<dbReference type="eggNOG" id="KOG0586">
    <property type="taxonomic scope" value="Eukaryota"/>
</dbReference>
<dbReference type="GeneTree" id="ENSGT00940000154989"/>
<dbReference type="HOGENOM" id="CLU_000288_87_2_1"/>
<dbReference type="InParanoid" id="P57059"/>
<dbReference type="OMA" id="IAQIWQH"/>
<dbReference type="OrthoDB" id="193931at2759"/>
<dbReference type="PAN-GO" id="P57059">
    <property type="GO annotations" value="5 GO annotations based on evolutionary models"/>
</dbReference>
<dbReference type="PhylomeDB" id="P57059"/>
<dbReference type="TreeFam" id="TF315213"/>
<dbReference type="PathwayCommons" id="P57059"/>
<dbReference type="Reactome" id="R-HSA-400253">
    <property type="pathway name" value="Circadian Clock"/>
</dbReference>
<dbReference type="SignaLink" id="P57059"/>
<dbReference type="SIGNOR" id="P57059"/>
<dbReference type="BioGRID-ORCS" id="102724428">
    <property type="hits" value="0 hits in 6 CRISPR screens"/>
</dbReference>
<dbReference type="BioGRID-ORCS" id="150094">
    <property type="hits" value="14 hits in 1186 CRISPR screens"/>
</dbReference>
<dbReference type="ChiTaRS" id="SIK1">
    <property type="organism name" value="human"/>
</dbReference>
<dbReference type="GeneWiki" id="SNF1LK"/>
<dbReference type="Pharos" id="P57059">
    <property type="development level" value="Tchem"/>
</dbReference>
<dbReference type="PRO" id="PR:P57059"/>
<dbReference type="Proteomes" id="UP000005640">
    <property type="component" value="Chromosome 21"/>
</dbReference>
<dbReference type="RNAct" id="P57059">
    <property type="molecule type" value="protein"/>
</dbReference>
<dbReference type="Bgee" id="ENSG00000142178">
    <property type="expression patterns" value="Expressed in mucosa of stomach and 97 other cell types or tissues"/>
</dbReference>
<dbReference type="ExpressionAtlas" id="P57059">
    <property type="expression patterns" value="baseline and differential"/>
</dbReference>
<dbReference type="GO" id="GO:0005737">
    <property type="term" value="C:cytoplasm"/>
    <property type="evidence" value="ECO:0000314"/>
    <property type="project" value="UniProtKB"/>
</dbReference>
<dbReference type="GO" id="GO:0005634">
    <property type="term" value="C:nucleus"/>
    <property type="evidence" value="ECO:0000314"/>
    <property type="project" value="UniProtKB"/>
</dbReference>
<dbReference type="GO" id="GO:0071889">
    <property type="term" value="F:14-3-3 protein binding"/>
    <property type="evidence" value="ECO:0000314"/>
    <property type="project" value="UniProtKB"/>
</dbReference>
<dbReference type="GO" id="GO:0005524">
    <property type="term" value="F:ATP binding"/>
    <property type="evidence" value="ECO:0000314"/>
    <property type="project" value="UniProtKB"/>
</dbReference>
<dbReference type="GO" id="GO:0008140">
    <property type="term" value="F:cAMP response element binding protein binding"/>
    <property type="evidence" value="ECO:0000250"/>
    <property type="project" value="UniProtKB"/>
</dbReference>
<dbReference type="GO" id="GO:0042826">
    <property type="term" value="F:histone deacetylase binding"/>
    <property type="evidence" value="ECO:0007669"/>
    <property type="project" value="Ensembl"/>
</dbReference>
<dbReference type="GO" id="GO:0000287">
    <property type="term" value="F:magnesium ion binding"/>
    <property type="evidence" value="ECO:0000314"/>
    <property type="project" value="UniProtKB"/>
</dbReference>
<dbReference type="GO" id="GO:0019901">
    <property type="term" value="F:protein kinase binding"/>
    <property type="evidence" value="ECO:0000353"/>
    <property type="project" value="UniProtKB"/>
</dbReference>
<dbReference type="GO" id="GO:0106310">
    <property type="term" value="F:protein serine kinase activity"/>
    <property type="evidence" value="ECO:0007669"/>
    <property type="project" value="RHEA"/>
</dbReference>
<dbReference type="GO" id="GO:0004674">
    <property type="term" value="F:protein serine/threonine kinase activity"/>
    <property type="evidence" value="ECO:0000314"/>
    <property type="project" value="UniProtKB"/>
</dbReference>
<dbReference type="GO" id="GO:0043276">
    <property type="term" value="P:anoikis"/>
    <property type="evidence" value="ECO:0007669"/>
    <property type="project" value="Ensembl"/>
</dbReference>
<dbReference type="GO" id="GO:0055007">
    <property type="term" value="P:cardiac muscle cell differentiation"/>
    <property type="evidence" value="ECO:0000250"/>
    <property type="project" value="UniProtKB"/>
</dbReference>
<dbReference type="GO" id="GO:0043153">
    <property type="term" value="P:entrainment of circadian clock by photoperiod"/>
    <property type="evidence" value="ECO:0000250"/>
    <property type="project" value="UniProtKB"/>
</dbReference>
<dbReference type="GO" id="GO:0035556">
    <property type="term" value="P:intracellular signal transduction"/>
    <property type="evidence" value="ECO:0000314"/>
    <property type="project" value="UniProtKB"/>
</dbReference>
<dbReference type="GO" id="GO:0032792">
    <property type="term" value="P:negative regulation of CREB transcription factor activity"/>
    <property type="evidence" value="ECO:0000250"/>
    <property type="project" value="UniProtKB"/>
</dbReference>
<dbReference type="GO" id="GO:0045721">
    <property type="term" value="P:negative regulation of gluconeogenesis"/>
    <property type="evidence" value="ECO:0000250"/>
    <property type="project" value="UniProtKB"/>
</dbReference>
<dbReference type="GO" id="GO:0000122">
    <property type="term" value="P:negative regulation of transcription by RNA polymerase II"/>
    <property type="evidence" value="ECO:0007669"/>
    <property type="project" value="Ensembl"/>
</dbReference>
<dbReference type="GO" id="GO:0010868">
    <property type="term" value="P:negative regulation of triglyceride biosynthetic process"/>
    <property type="evidence" value="ECO:0000250"/>
    <property type="project" value="UniProtKB"/>
</dbReference>
<dbReference type="GO" id="GO:2000210">
    <property type="term" value="P:positive regulation of anoikis"/>
    <property type="evidence" value="ECO:0000315"/>
    <property type="project" value="BHF-UCL"/>
</dbReference>
<dbReference type="GO" id="GO:0046777">
    <property type="term" value="P:protein autophosphorylation"/>
    <property type="evidence" value="ECO:0000314"/>
    <property type="project" value="UniProtKB"/>
</dbReference>
<dbReference type="GO" id="GO:0006468">
    <property type="term" value="P:protein phosphorylation"/>
    <property type="evidence" value="ECO:0000314"/>
    <property type="project" value="UniProtKB"/>
</dbReference>
<dbReference type="GO" id="GO:0045595">
    <property type="term" value="P:regulation of cell differentiation"/>
    <property type="evidence" value="ECO:0000250"/>
    <property type="project" value="UniProtKB"/>
</dbReference>
<dbReference type="GO" id="GO:0007346">
    <property type="term" value="P:regulation of mitotic cell cycle"/>
    <property type="evidence" value="ECO:0000250"/>
    <property type="project" value="UniProtKB"/>
</dbReference>
<dbReference type="GO" id="GO:0010830">
    <property type="term" value="P:regulation of myotube differentiation"/>
    <property type="evidence" value="ECO:0000250"/>
    <property type="project" value="UniProtKB"/>
</dbReference>
<dbReference type="GO" id="GO:0002028">
    <property type="term" value="P:regulation of sodium ion transport"/>
    <property type="evidence" value="ECO:0000250"/>
    <property type="project" value="UniProtKB"/>
</dbReference>
<dbReference type="GO" id="GO:0048511">
    <property type="term" value="P:rhythmic process"/>
    <property type="evidence" value="ECO:0007669"/>
    <property type="project" value="UniProtKB-KW"/>
</dbReference>
<dbReference type="CDD" id="cd14071">
    <property type="entry name" value="STKc_SIK"/>
    <property type="match status" value="1"/>
</dbReference>
<dbReference type="CDD" id="cd14408">
    <property type="entry name" value="UBA_SIK1"/>
    <property type="match status" value="1"/>
</dbReference>
<dbReference type="FunFam" id="3.30.200.20:FF:000003">
    <property type="entry name" value="Non-specific serine/threonine protein kinase"/>
    <property type="match status" value="1"/>
</dbReference>
<dbReference type="FunFam" id="1.10.510.10:FF:000154">
    <property type="entry name" value="Serine/threonine-protein kinase SIK2"/>
    <property type="match status" value="1"/>
</dbReference>
<dbReference type="Gene3D" id="1.10.510.10">
    <property type="entry name" value="Transferase(Phosphotransferase) domain 1"/>
    <property type="match status" value="1"/>
</dbReference>
<dbReference type="InterPro" id="IPR011009">
    <property type="entry name" value="Kinase-like_dom_sf"/>
</dbReference>
<dbReference type="InterPro" id="IPR000719">
    <property type="entry name" value="Prot_kinase_dom"/>
</dbReference>
<dbReference type="InterPro" id="IPR017441">
    <property type="entry name" value="Protein_kinase_ATP_BS"/>
</dbReference>
<dbReference type="InterPro" id="IPR008271">
    <property type="entry name" value="Ser/Thr_kinase_AS"/>
</dbReference>
<dbReference type="InterPro" id="IPR017090">
    <property type="entry name" value="Ser/Thr_kinase_SIK1/2"/>
</dbReference>
<dbReference type="InterPro" id="IPR034672">
    <property type="entry name" value="SIK"/>
</dbReference>
<dbReference type="InterPro" id="IPR015940">
    <property type="entry name" value="UBA"/>
</dbReference>
<dbReference type="PANTHER" id="PTHR24346">
    <property type="entry name" value="MAP/MICROTUBULE AFFINITY-REGULATING KINASE"/>
    <property type="match status" value="1"/>
</dbReference>
<dbReference type="PANTHER" id="PTHR24346:SF47">
    <property type="entry name" value="SERINE_THREONINE-PROTEIN KINASE SIK2-RELATED"/>
    <property type="match status" value="1"/>
</dbReference>
<dbReference type="Pfam" id="PF00069">
    <property type="entry name" value="Pkinase"/>
    <property type="match status" value="1"/>
</dbReference>
<dbReference type="Pfam" id="PF23312">
    <property type="entry name" value="UBA_SIK3"/>
    <property type="match status" value="1"/>
</dbReference>
<dbReference type="PIRSF" id="PIRSF037014">
    <property type="entry name" value="Ser/Thr_PK_SNF1-like"/>
    <property type="match status" value="1"/>
</dbReference>
<dbReference type="SMART" id="SM00220">
    <property type="entry name" value="S_TKc"/>
    <property type="match status" value="1"/>
</dbReference>
<dbReference type="SUPFAM" id="SSF56112">
    <property type="entry name" value="Protein kinase-like (PK-like)"/>
    <property type="match status" value="1"/>
</dbReference>
<dbReference type="PROSITE" id="PS00107">
    <property type="entry name" value="PROTEIN_KINASE_ATP"/>
    <property type="match status" value="1"/>
</dbReference>
<dbReference type="PROSITE" id="PS50011">
    <property type="entry name" value="PROTEIN_KINASE_DOM"/>
    <property type="match status" value="1"/>
</dbReference>
<dbReference type="PROSITE" id="PS00108">
    <property type="entry name" value="PROTEIN_KINASE_ST"/>
    <property type="match status" value="1"/>
</dbReference>
<dbReference type="PROSITE" id="PS50030">
    <property type="entry name" value="UBA"/>
    <property type="match status" value="1"/>
</dbReference>
<gene>
    <name type="primary">SIK1</name>
    <name type="synonym">SIK</name>
    <name type="synonym">SNF1LK</name>
</gene>
<proteinExistence type="evidence at protein level"/>
<feature type="chain" id="PRO_0000086659" description="Serine/threonine-protein kinase SIK1">
    <location>
        <begin position="1"/>
        <end position="783"/>
    </location>
</feature>
<feature type="domain" description="Protein kinase" evidence="4">
    <location>
        <begin position="27"/>
        <end position="278"/>
    </location>
</feature>
<feature type="domain" description="UBA" evidence="5">
    <location>
        <begin position="303"/>
        <end position="343"/>
    </location>
</feature>
<feature type="region of interest" description="Disordered" evidence="7">
    <location>
        <begin position="353"/>
        <end position="377"/>
    </location>
</feature>
<feature type="region of interest" description="Disordered" evidence="7">
    <location>
        <begin position="449"/>
        <end position="477"/>
    </location>
</feature>
<feature type="region of interest" description="RK-rich region; required for cAMP responsiveness and nuclear localization" evidence="18">
    <location>
        <begin position="583"/>
        <end position="612"/>
    </location>
</feature>
<feature type="region of interest" description="Disordered" evidence="7">
    <location>
        <begin position="619"/>
        <end position="643"/>
    </location>
</feature>
<feature type="active site" description="Proton acceptor" evidence="4 6">
    <location>
        <position position="149"/>
    </location>
</feature>
<feature type="binding site" evidence="4">
    <location>
        <begin position="33"/>
        <end position="41"/>
    </location>
    <ligand>
        <name>ATP</name>
        <dbReference type="ChEBI" id="CHEBI:30616"/>
    </ligand>
</feature>
<feature type="binding site" evidence="17">
    <location>
        <position position="56"/>
    </location>
    <ligand>
        <name>ATP</name>
        <dbReference type="ChEBI" id="CHEBI:30616"/>
    </ligand>
</feature>
<feature type="modified residue" description="Phosphothreonine; by LKB1 and GSK3-beta" evidence="9 13">
    <location>
        <position position="182"/>
    </location>
</feature>
<feature type="modified residue" description="Phosphoserine; by autocatalysis" evidence="13">
    <location>
        <position position="186"/>
    </location>
</feature>
<feature type="modified residue" description="Phosphothreonine; by CaMK1" evidence="3">
    <location>
        <position position="322"/>
    </location>
</feature>
<feature type="modified residue" description="Phosphothreonine; by PKA" evidence="18">
    <location>
        <position position="473"/>
    </location>
</feature>
<feature type="modified residue" description="Phosphoserine; by PKA" evidence="2 18">
    <location>
        <position position="575"/>
    </location>
</feature>
<feature type="sequence variant" id="VAR_041087" description="In dbSNP:rs3746951." evidence="12">
    <original>G</original>
    <variation>S</variation>
    <location>
        <position position="15"/>
    </location>
</feature>
<feature type="sequence variant" id="VAR_041088" description="In dbSNP:rs45491503." evidence="12">
    <original>D</original>
    <variation>N</variation>
    <location>
        <position position="142"/>
    </location>
</feature>
<feature type="sequence variant" id="VAR_041089" description="In a glioblastoma multiforme sample; somatic mutation." evidence="12">
    <original>G</original>
    <variation>S</variation>
    <location>
        <position position="211"/>
    </location>
</feature>
<feature type="sequence variant" id="VAR_073701" description="In DEE30; no change in subcellular location; dbSNP:rs786205159." evidence="15">
    <original>P</original>
    <variation>T</variation>
    <location>
        <position position="287"/>
    </location>
</feature>
<feature type="sequence variant" id="VAR_073702" description="In DEE30; no change in subcellular location." evidence="15">
    <original>S</original>
    <variation>C</variation>
    <location>
        <position position="411"/>
    </location>
</feature>
<feature type="sequence variant" id="VAR_033910" description="In dbSNP:rs34164089.">
    <original>R</original>
    <variation>W</variation>
    <location>
        <position position="430"/>
    </location>
</feature>
<feature type="sequence variant" id="VAR_041090" description="In a metastatic melanoma sample; somatic mutation." evidence="12">
    <original>G</original>
    <variation>D</variation>
    <location>
        <position position="469"/>
    </location>
</feature>
<feature type="sequence variant" id="VAR_021255" description="In dbSNP:rs430554." evidence="8 10 12">
    <original>A</original>
    <variation>V</variation>
    <location>
        <position position="615"/>
    </location>
</feature>
<feature type="sequence variant" id="VAR_073703" description="In DEE30; no change in subcellular location; dbSNP:rs786205163." evidence="15">
    <original>G</original>
    <variation>S</variation>
    <location>
        <position position="636"/>
    </location>
</feature>
<feature type="sequence variant" id="VAR_041091" description="In dbSNP:rs56386767." evidence="12">
    <original>P</original>
    <variation>L</variation>
    <location>
        <position position="696"/>
    </location>
</feature>
<feature type="sequence variant" id="VAR_041092" description="In dbSNP:rs35596465." evidence="12">
    <original>A</original>
    <variation>V</variation>
    <location>
        <position position="725"/>
    </location>
</feature>
<feature type="mutagenesis site" description="Loss of kinase activity." evidence="13 14">
    <original>K</original>
    <variation>M</variation>
    <location>
        <position position="56"/>
    </location>
</feature>
<feature type="mutagenesis site" description="Decreased kinase activity without affecting much autophosphorylation status." evidence="13">
    <original>S</original>
    <variation>A</variation>
    <location>
        <position position="135"/>
    </location>
</feature>
<feature type="mutagenesis site" description="Prevents phosphorylation and activation by STK11/LKB1 complex. Reduced inhibition of CRTC3-mediated transcriptional activity." evidence="9 16">
    <original>T</original>
    <variation>A</variation>
    <location>
        <position position="182"/>
    </location>
</feature>
<feature type="mutagenesis site" description="Impaired autophosphorylation and kinase activity." evidence="13">
    <original>S</original>
    <variation>A</variation>
    <variation>D</variation>
    <variation>C</variation>
    <variation>G</variation>
    <location>
        <position position="186"/>
    </location>
</feature>
<feature type="mutagenesis site" description="Does not autophosphorylation and kinase activity." evidence="13">
    <original>S</original>
    <variation>T</variation>
    <location>
        <position position="186"/>
    </location>
</feature>
<feature type="mutagenesis site" description="Decreased kinase activity without affecting much autophosphorylation status." evidence="13">
    <original>S</original>
    <variation>A</variation>
    <location>
        <position position="209"/>
    </location>
</feature>
<feature type="mutagenesis site" description="Decreased kinase activity without affecting much autophosphorylation status." evidence="13">
    <original>S</original>
    <variation>A</variation>
    <location>
        <position position="248"/>
    </location>
</feature>
<feature type="mutagenesis site" description="Reduced but still present interaction with 14-3-3 proteins in response to cAMP signaling and, thus, still able to inhibit TORC activity. Resistant to inhibition by cAMP signaling and, thus, still able to inhibit TORC activity; when associated with A-575." evidence="16">
    <original>T</original>
    <variation>A</variation>
    <location>
        <position position="473"/>
    </location>
</feature>
<feature type="mutagenesis site" description="Reduced but still present interaction with 14-3-3 proteins in response to cAMP signaling and, thus, still able to inhibit TORC activity." evidence="16">
    <original>T</original>
    <variation>E</variation>
    <location>
        <position position="473"/>
    </location>
</feature>
<feature type="mutagenesis site" description="Loss of interaction with 14-3-3 proteins in response to cAMP signaling and, thus, still able to inhibit TORC activity. Resistant to inhibition by cAMP signaling and, thus, still able to inhibit TORC activity; when associated with A-473." evidence="16">
    <original>S</original>
    <variation>A</variation>
    <location>
        <position position="575"/>
    </location>
</feature>
<feature type="mutagenesis site" description="Strongly reduced but still present interaction with 14-3-3 proteins in response to cAMP signaling and, thus, still able to inhibit TORC activity." evidence="16">
    <original>S</original>
    <variation>E</variation>
    <location>
        <position position="575"/>
    </location>
</feature>
<feature type="sequence conflict" description="In Ref. 3; BAA95536." evidence="17" ref="3">
    <original>A</original>
    <variation>AGTE</variation>
    <location>
        <position position="166"/>
    </location>
</feature>
<feature type="sequence conflict" description="In Ref. 3; BAA95536." evidence="17" ref="3">
    <original>IV</original>
    <variation>KF</variation>
    <location>
        <begin position="489"/>
        <end position="490"/>
    </location>
</feature>
<name>SIK1_HUMAN</name>
<protein>
    <recommendedName>
        <fullName>Serine/threonine-protein kinase SIK1</fullName>
        <ecNumber evidence="9 13 16">2.7.11.1</ecNumber>
    </recommendedName>
    <alternativeName>
        <fullName>Salt-inducible kinase 1</fullName>
        <shortName>SIK-1</shortName>
    </alternativeName>
    <alternativeName>
        <fullName>Serine/threonine-protein kinase SNF1-like kinase 1</fullName>
        <shortName>Serine/threonine-protein kinase SNF1LK</shortName>
    </alternativeName>
</protein>
<organism>
    <name type="scientific">Homo sapiens</name>
    <name type="common">Human</name>
    <dbReference type="NCBI Taxonomy" id="9606"/>
    <lineage>
        <taxon>Eukaryota</taxon>
        <taxon>Metazoa</taxon>
        <taxon>Chordata</taxon>
        <taxon>Craniata</taxon>
        <taxon>Vertebrata</taxon>
        <taxon>Euteleostomi</taxon>
        <taxon>Mammalia</taxon>
        <taxon>Eutheria</taxon>
        <taxon>Euarchontoglires</taxon>
        <taxon>Primates</taxon>
        <taxon>Haplorrhini</taxon>
        <taxon>Catarrhini</taxon>
        <taxon>Hominidae</taxon>
        <taxon>Homo</taxon>
    </lineage>
</organism>
<accession>P57059</accession>
<accession>A6NC84</accession>
<accession>Q5R2V5</accession>
<accession>Q6ZNL8</accession>
<accession>Q86YJ2</accession>
<sequence length="783" mass="84902">MVIMSEFSADPAGQGQGQQKPLRVGFYDIERTLGKGNFAVVKLARHRVTKTQVAIKIIDKTRLDSSNLEKIYREVQLMKLLNHPHIIKLYQVMETKDMLYIVTEFAKNGEMFDYLTSNGHLSENEARKKFWQILSAVEYCHDHHIVHRDLKTENLLLDGNMDIKLADFGFGNFYKSGEPLSTWCGSPPYAAPEVFEGKEYEGPQLDIWSLGVVLYVLVCGSLPFDGPNLPTLRQRVLEGRFRIPFFMSQDCESLIRRMLVVDPARRITIAQIRQHRWMRAEPCLPGPACPAFSAHSYTSNLGDYDEQALGIMQTLGVDRQRTVESLQNSSYNHFAAIYYLLLERLKEYRNAQCARPGPARQPRPRSSDLSGLEVPQEGLSTDPFRPALLCPQPQTLVQSVLQAEMDCELQSSLQWPLFFPVDASCSGVFRPRPVSPSSLLDTAISEEARQGPGLEEEQDTQESLPSSTGRRHTLAEVSTRLSPLTAPCIVVSPSTTASPAEGTSSDSCLTFSASKSPAGLSGTPATQGLLGACSPVRLASPFLGSQSATPVLQAQGGLGGAVLLPVSFQEGRRASDTSLTQGLKAFRQQLRKTTRTKGFLGLNKIKGLARQVCQAPASRASRGGLSPFHAPAQSPGLHGGAAGSREGWSLLEEVLEQQRLLQLQHHPAAAPGCSQAPQPAPAPFVIAPCDGPGAAPLPSTLLTSGLPLLPPPLLQTGASPVASAAQLLDTHLHIGTGPTALPAVPPPRLARLAPGCEPLGLLQGDCEMEDLMPCSLGTFVLVQ</sequence>
<comment type="function">
    <text evidence="2 9 11 13 14 16">Serine/threonine-protein kinase involved in various processes such as cell cycle regulation, gluconeogenesis and lipogenesis regulation, muscle growth and differentiation and tumor suppression. Phosphorylates HDAC4, HDAC5, PPME1, SREBF1, CRTC1/TORC1. Inhibits CREB activity by phosphorylating and inhibiting activity of TORCs, the CREB-specific coactivators, like CRTC2/TORC2 and CRTC3/TORC3 in response to cAMP signaling (PubMed:29211348). Acts as a tumor suppressor and plays a key role in p53/TP53-dependent anoikis, a type of apoptosis triggered by cell detachment: required for phosphorylation of p53/TP53 in response to loss of adhesion and is able to suppress metastasis. Part of a sodium-sensing signaling network, probably by mediating phosphorylation of PPME1: following increases in intracellular sodium, SIK1 is activated by CaMK1 and phosphorylates PPME1 subunit of protein phosphatase 2A (PP2A), leading to dephosphorylation of sodium/potassium-transporting ATPase ATP1A1 and subsequent increase activity of ATP1A1. Acts as a regulator of muscle cells by phosphorylating and inhibiting class II histone deacetylases HDAC4 and HDAC5, leading to promote expression of MEF2 target genes in myocytes. Also required during cardiomyogenesis by regulating the exit of cardiomyoblasts from the cell cycle via down-regulation of CDKN1C/p57Kip2. Acts as a regulator of hepatic gluconeogenesis by phosphorylating and repressing the CREB-specific coactivators CRTC1/TORC1 and CRTC2/TORC2, leading to inhibit CREB activity. Also regulates hepatic lipogenesis by phosphorylating and inhibiting SREBF1. In concert with CRTC1/TORC1, regulates the light-induced entrainment of the circadian clock by attenuating PER1 induction; represses CREB-mediated transcription of PER1 by phosphorylating and deactivating CRTC1/TORC1 (By similarity).</text>
</comment>
<comment type="catalytic activity">
    <reaction evidence="9 13 16">
        <text>L-seryl-[protein] + ATP = O-phospho-L-seryl-[protein] + ADP + H(+)</text>
        <dbReference type="Rhea" id="RHEA:17989"/>
        <dbReference type="Rhea" id="RHEA-COMP:9863"/>
        <dbReference type="Rhea" id="RHEA-COMP:11604"/>
        <dbReference type="ChEBI" id="CHEBI:15378"/>
        <dbReference type="ChEBI" id="CHEBI:29999"/>
        <dbReference type="ChEBI" id="CHEBI:30616"/>
        <dbReference type="ChEBI" id="CHEBI:83421"/>
        <dbReference type="ChEBI" id="CHEBI:456216"/>
        <dbReference type="EC" id="2.7.11.1"/>
    </reaction>
</comment>
<comment type="catalytic activity">
    <reaction evidence="9 13 16">
        <text>L-threonyl-[protein] + ATP = O-phospho-L-threonyl-[protein] + ADP + H(+)</text>
        <dbReference type="Rhea" id="RHEA:46608"/>
        <dbReference type="Rhea" id="RHEA-COMP:11060"/>
        <dbReference type="Rhea" id="RHEA-COMP:11605"/>
        <dbReference type="ChEBI" id="CHEBI:15378"/>
        <dbReference type="ChEBI" id="CHEBI:30013"/>
        <dbReference type="ChEBI" id="CHEBI:30616"/>
        <dbReference type="ChEBI" id="CHEBI:61977"/>
        <dbReference type="ChEBI" id="CHEBI:456216"/>
        <dbReference type="EC" id="2.7.11.1"/>
    </reaction>
</comment>
<comment type="cofactor">
    <cofactor evidence="1">
        <name>Mg(2+)</name>
        <dbReference type="ChEBI" id="CHEBI:18420"/>
    </cofactor>
</comment>
<comment type="activity regulation">
    <text evidence="9 16">Activated by phosphorylation on Thr-182 (PubMed:14976552). Also activated by phosphorylation on Thr-322 in response to increases in intracellular sodium in parallel with elevations in intracellular calcium through the reversible sodium/calcium exchanger (PubMed:14976552). Inhibited by phosphorylation at Thr-473 and Ser-575, probably by PKA, which triggers interaction with 14-3-3 proteins (PubMed:29211348).</text>
</comment>
<comment type="subunit">
    <text evidence="3 11 13">Interacts with ATP1A1 (By similarity). Interacts (when phosphorylated on Thr-182 and Ser-186) with YWHAZ (PubMed:16306228). Interacts (when phosphorylated at Thr-473 and/or Ser-575) with 14-3-3 proteins; the interaction inhibits kinase activity towards TORCs (PubMed:29211348). There is a cooperative effect of the phosphorylation sites in 14-3-3 binding as the interaction is stronger when both Thr-473 and Ser-575 are modified (PubMed:29211348).</text>
</comment>
<comment type="interaction">
    <interactant intactId="EBI-1181640">
        <id>P57059</id>
    </interactant>
    <interactant intactId="EBI-356498">
        <id>P62258</id>
        <label>YWHAE</label>
    </interactant>
    <organismsDiffer>false</organismsDiffer>
    <experiments>4</experiments>
</comment>
<comment type="interaction">
    <interactant intactId="EBI-1181640">
        <id>P57059</id>
    </interactant>
    <interactant intactId="EBI-347088">
        <id>P63104</id>
        <label>YWHAZ</label>
    </interactant>
    <organismsDiffer>false</organismsDiffer>
    <experiments>5</experiments>
</comment>
<comment type="subcellular location">
    <subcellularLocation>
        <location evidence="11 16">Cytoplasm</location>
    </subcellularLocation>
    <subcellularLocation>
        <location evidence="11 16">Nucleus</location>
    </subcellularLocation>
    <text>Locates to cytoplasm when inactive following cAMP-induced phosphorylation, probably by PKA (PubMed:29211348).</text>
</comment>
<comment type="domain">
    <text evidence="18">The RK-rich region determines the subcellular location and is required for cAMP responsiveness.</text>
</comment>
<comment type="PTM">
    <text evidence="9 13 16">Phosphorylated at Thr-182 by STK11/LKB1 in complex with STE20-related adapter-alpha (STRADA) pseudo kinase and CAB39, leading to its activation. Phosphorylation at Thr-182 promotes autophosphorylation at Ser-186, which is required for sustained activity. Autophosphorylation at Ser-186 is maintained by sequential phosphorylation at Thr-182 by GSK3-beta. GSK3-beta cannot initiate phosphorylation at Thr-182, it can only maintain it. Phosphorylation at Ser-575 in response to cAMP signaling promotes translocation to the cytoplasm (PubMed:29211348). Phosphorylation at Thr-322 by CaMK1 following intracellular sodium concentration leads to activation.</text>
</comment>
<comment type="disease" evidence="15">
    <disease id="DI-04413">
        <name>Developmental and epileptic encephalopathy 30</name>
        <acronym>DEE30</acronym>
        <description>A form of epileptic encephalopathy, a heterogeneous group of severe early-onset epilepsies characterized by refractory seizures, neurodevelopmental impairment, and poor prognosis. Development is normal prior to seizure onset, after which cognitive and motor delays become apparent.</description>
        <dbReference type="MIM" id="616341"/>
    </disease>
    <text>The disease is caused by variants affecting the gene represented in this entry.</text>
</comment>
<comment type="disease">
    <text evidence="14">Defects in SIK1 may be associated with some cancers, such as breast cancers. Loss of SIK1 correlates with poor patient outcome in breast cancers (PubMed:19622832).</text>
</comment>
<comment type="similarity">
    <text evidence="17">Belongs to the protein kinase superfamily. CAMK Ser/Thr protein kinase family. AMPK subfamily.</text>
</comment>
<reference key="1">
    <citation type="journal article" date="2004" name="EMBO J.">
        <title>LKB1 is a master kinase that activates 13 kinases of the AMPK subfamily, including MARK/PAR-1.</title>
        <authorList>
            <person name="Lizcano J.M."/>
            <person name="Goeransson O."/>
            <person name="Toth R."/>
            <person name="Deak M."/>
            <person name="Morrice N.A."/>
            <person name="Boudeau J."/>
            <person name="Hawley S.A."/>
            <person name="Udd L."/>
            <person name="Maekelae T.P."/>
            <person name="Hardie D.G."/>
            <person name="Alessi D.R."/>
        </authorList>
    </citation>
    <scope>NUCLEOTIDE SEQUENCE [MRNA]</scope>
    <scope>FUNCTION</scope>
    <scope>CATALYTIC ACTIVITY</scope>
    <scope>ACTIVITY REGULATION</scope>
    <scope>PHOSPHORYLATION AT THR-182</scope>
    <scope>MUTAGENESIS OF THR-182</scope>
</reference>
<reference key="2">
    <citation type="submission" date="2000-08" db="EMBL/GenBank/DDBJ databases">
        <authorList>
            <person name="Shimizu N."/>
            <person name="Kudoh J."/>
            <person name="Shibuya K."/>
        </authorList>
    </citation>
    <scope>NUCLEOTIDE SEQUENCE [MRNA]</scope>
    <source>
        <tissue>Fetal lung</tissue>
    </source>
</reference>
<reference key="3">
    <citation type="journal article" date="2000" name="Nature">
        <title>The DNA sequence of human chromosome 21.</title>
        <authorList>
            <person name="Hattori M."/>
            <person name="Fujiyama A."/>
            <person name="Taylor T.D."/>
            <person name="Watanabe H."/>
            <person name="Yada T."/>
            <person name="Park H.-S."/>
            <person name="Toyoda A."/>
            <person name="Ishii K."/>
            <person name="Totoki Y."/>
            <person name="Choi D.-K."/>
            <person name="Groner Y."/>
            <person name="Soeda E."/>
            <person name="Ohki M."/>
            <person name="Takagi T."/>
            <person name="Sakaki Y."/>
            <person name="Taudien S."/>
            <person name="Blechschmidt K."/>
            <person name="Polley A."/>
            <person name="Menzel U."/>
            <person name="Delabar J."/>
            <person name="Kumpf K."/>
            <person name="Lehmann R."/>
            <person name="Patterson D."/>
            <person name="Reichwald K."/>
            <person name="Rump A."/>
            <person name="Schillhabel M."/>
            <person name="Schudy A."/>
            <person name="Zimmermann W."/>
            <person name="Rosenthal A."/>
            <person name="Kudoh J."/>
            <person name="Shibuya K."/>
            <person name="Kawasaki K."/>
            <person name="Asakawa S."/>
            <person name="Shintani A."/>
            <person name="Sasaki T."/>
            <person name="Nagamine K."/>
            <person name="Mitsuyama S."/>
            <person name="Antonarakis S.E."/>
            <person name="Minoshima S."/>
            <person name="Shimizu N."/>
            <person name="Nordsiek G."/>
            <person name="Hornischer K."/>
            <person name="Brandt P."/>
            <person name="Scharfe M."/>
            <person name="Schoen O."/>
            <person name="Desario A."/>
            <person name="Reichelt J."/>
            <person name="Kauer G."/>
            <person name="Bloecker H."/>
            <person name="Ramser J."/>
            <person name="Beck A."/>
            <person name="Klages S."/>
            <person name="Hennig S."/>
            <person name="Riesselmann L."/>
            <person name="Dagand E."/>
            <person name="Wehrmeyer S."/>
            <person name="Borzym K."/>
            <person name="Gardiner K."/>
            <person name="Nizetic D."/>
            <person name="Francis F."/>
            <person name="Lehrach H."/>
            <person name="Reinhardt R."/>
            <person name="Yaspo M.-L."/>
        </authorList>
    </citation>
    <scope>NUCLEOTIDE SEQUENCE [LARGE SCALE GENOMIC DNA]</scope>
</reference>
<reference key="4">
    <citation type="journal article" date="2004" name="Genome Res.">
        <title>The status, quality, and expansion of the NIH full-length cDNA project: the Mammalian Gene Collection (MGC).</title>
        <authorList>
            <consortium name="The MGC Project Team"/>
        </authorList>
    </citation>
    <scope>NUCLEOTIDE SEQUENCE [LARGE SCALE MRNA]</scope>
    <scope>VARIANT VAL-615</scope>
    <source>
        <tissue>Testis</tissue>
    </source>
</reference>
<reference key="5">
    <citation type="journal article" date="2004" name="Nat. Genet.">
        <title>Complete sequencing and characterization of 21,243 full-length human cDNAs.</title>
        <authorList>
            <person name="Ota T."/>
            <person name="Suzuki Y."/>
            <person name="Nishikawa T."/>
            <person name="Otsuki T."/>
            <person name="Sugiyama T."/>
            <person name="Irie R."/>
            <person name="Wakamatsu A."/>
            <person name="Hayashi K."/>
            <person name="Sato H."/>
            <person name="Nagai K."/>
            <person name="Kimura K."/>
            <person name="Makita H."/>
            <person name="Sekine M."/>
            <person name="Obayashi M."/>
            <person name="Nishi T."/>
            <person name="Shibahara T."/>
            <person name="Tanaka T."/>
            <person name="Ishii S."/>
            <person name="Yamamoto J."/>
            <person name="Saito K."/>
            <person name="Kawai Y."/>
            <person name="Isono Y."/>
            <person name="Nakamura Y."/>
            <person name="Nagahari K."/>
            <person name="Murakami K."/>
            <person name="Yasuda T."/>
            <person name="Iwayanagi T."/>
            <person name="Wagatsuma M."/>
            <person name="Shiratori A."/>
            <person name="Sudo H."/>
            <person name="Hosoiri T."/>
            <person name="Kaku Y."/>
            <person name="Kodaira H."/>
            <person name="Kondo H."/>
            <person name="Sugawara M."/>
            <person name="Takahashi M."/>
            <person name="Kanda K."/>
            <person name="Yokoi T."/>
            <person name="Furuya T."/>
            <person name="Kikkawa E."/>
            <person name="Omura Y."/>
            <person name="Abe K."/>
            <person name="Kamihara K."/>
            <person name="Katsuta N."/>
            <person name="Sato K."/>
            <person name="Tanikawa M."/>
            <person name="Yamazaki M."/>
            <person name="Ninomiya K."/>
            <person name="Ishibashi T."/>
            <person name="Yamashita H."/>
            <person name="Murakawa K."/>
            <person name="Fujimori K."/>
            <person name="Tanai H."/>
            <person name="Kimata M."/>
            <person name="Watanabe M."/>
            <person name="Hiraoka S."/>
            <person name="Chiba Y."/>
            <person name="Ishida S."/>
            <person name="Ono Y."/>
            <person name="Takiguchi S."/>
            <person name="Watanabe S."/>
            <person name="Yosida M."/>
            <person name="Hotuta T."/>
            <person name="Kusano J."/>
            <person name="Kanehori K."/>
            <person name="Takahashi-Fujii A."/>
            <person name="Hara H."/>
            <person name="Tanase T.-O."/>
            <person name="Nomura Y."/>
            <person name="Togiya S."/>
            <person name="Komai F."/>
            <person name="Hara R."/>
            <person name="Takeuchi K."/>
            <person name="Arita M."/>
            <person name="Imose N."/>
            <person name="Musashino K."/>
            <person name="Yuuki H."/>
            <person name="Oshima A."/>
            <person name="Sasaki N."/>
            <person name="Aotsuka S."/>
            <person name="Yoshikawa Y."/>
            <person name="Matsunawa H."/>
            <person name="Ichihara T."/>
            <person name="Shiohata N."/>
            <person name="Sano S."/>
            <person name="Moriya S."/>
            <person name="Momiyama H."/>
            <person name="Satoh N."/>
            <person name="Takami S."/>
            <person name="Terashima Y."/>
            <person name="Suzuki O."/>
            <person name="Nakagawa S."/>
            <person name="Senoh A."/>
            <person name="Mizoguchi H."/>
            <person name="Goto Y."/>
            <person name="Shimizu F."/>
            <person name="Wakebe H."/>
            <person name="Hishigaki H."/>
            <person name="Watanabe T."/>
            <person name="Sugiyama A."/>
            <person name="Takemoto M."/>
            <person name="Kawakami B."/>
            <person name="Yamazaki M."/>
            <person name="Watanabe K."/>
            <person name="Kumagai A."/>
            <person name="Itakura S."/>
            <person name="Fukuzumi Y."/>
            <person name="Fujimori Y."/>
            <person name="Komiyama M."/>
            <person name="Tashiro H."/>
            <person name="Tanigami A."/>
            <person name="Fujiwara T."/>
            <person name="Ono T."/>
            <person name="Yamada K."/>
            <person name="Fujii Y."/>
            <person name="Ozaki K."/>
            <person name="Hirao M."/>
            <person name="Ohmori Y."/>
            <person name="Kawabata A."/>
            <person name="Hikiji T."/>
            <person name="Kobatake N."/>
            <person name="Inagaki H."/>
            <person name="Ikema Y."/>
            <person name="Okamoto S."/>
            <person name="Okitani R."/>
            <person name="Kawakami T."/>
            <person name="Noguchi S."/>
            <person name="Itoh T."/>
            <person name="Shigeta K."/>
            <person name="Senba T."/>
            <person name="Matsumura K."/>
            <person name="Nakajima Y."/>
            <person name="Mizuno T."/>
            <person name="Morinaga M."/>
            <person name="Sasaki M."/>
            <person name="Togashi T."/>
            <person name="Oyama M."/>
            <person name="Hata H."/>
            <person name="Watanabe M."/>
            <person name="Komatsu T."/>
            <person name="Mizushima-Sugano J."/>
            <person name="Satoh T."/>
            <person name="Shirai Y."/>
            <person name="Takahashi Y."/>
            <person name="Nakagawa K."/>
            <person name="Okumura K."/>
            <person name="Nagase T."/>
            <person name="Nomura N."/>
            <person name="Kikuchi H."/>
            <person name="Masuho Y."/>
            <person name="Yamashita R."/>
            <person name="Nakai K."/>
            <person name="Yada T."/>
            <person name="Nakamura Y."/>
            <person name="Ohara O."/>
            <person name="Isogai T."/>
            <person name="Sugano S."/>
        </authorList>
    </citation>
    <scope>NUCLEOTIDE SEQUENCE [LARGE SCALE MRNA] OF 20-783</scope>
    <scope>VARIANT VAL-615</scope>
    <source>
        <tissue>Spleen</tissue>
    </source>
</reference>
<reference key="6">
    <citation type="journal article" date="2005" name="J. Cell Sci.">
        <title>14-3-3 cooperates with LKB1 to regulate the activity and localization of QSK and SIK.</title>
        <authorList>
            <person name="Al-Hakim A.K."/>
            <person name="Goransson O."/>
            <person name="Deak M."/>
            <person name="Toth R."/>
            <person name="Campbell D.G."/>
            <person name="Morrice N.A."/>
            <person name="Prescott A.R."/>
            <person name="Alessi D.R."/>
        </authorList>
    </citation>
    <scope>FUNCTION</scope>
    <scope>SUBCELLULAR LOCATION</scope>
    <scope>INTERACTION WITH YWHAZ</scope>
</reference>
<reference key="7">
    <citation type="journal article" date="2008" name="J. Cell. Biochem.">
        <title>Importance of autophosphorylation at Ser186 in the A-loop of salt inducible kinase 1 for its sustained kinase activity.</title>
        <authorList>
            <person name="Hashimoto Y.K."/>
            <person name="Satoh T."/>
            <person name="Okamoto M."/>
            <person name="Takemori H."/>
        </authorList>
    </citation>
    <scope>FUNCTION</scope>
    <scope>CATALYTIC ACTIVITY</scope>
    <scope>AUTOPHOSPHORYLATION</scope>
    <scope>PHOSPHORYLATION AT THR-182 AND SER-186</scope>
    <scope>INTERACTION WITH YWHAZ</scope>
    <scope>MUTAGENESIS OF LYS-56; SER-135; SER-186; SER-209 AND SER-248</scope>
</reference>
<reference key="8">
    <citation type="journal article" date="2009" name="Sci. Signal.">
        <title>SIK1 couples LKB1 to p53-dependent anoikis and suppresses metastasis.</title>
        <authorList>
            <person name="Cheng H."/>
            <person name="Liu P."/>
            <person name="Wang Z.C."/>
            <person name="Zou L."/>
            <person name="Santiago S."/>
            <person name="Garbitt V."/>
            <person name="Gjoerup O.V."/>
            <person name="Iglehart J.D."/>
            <person name="Miron A."/>
            <person name="Richardson A.L."/>
            <person name="Hahn W.C."/>
            <person name="Zhao J.J."/>
        </authorList>
    </citation>
    <scope>FUNCTION</scope>
    <scope>MUTAGENESIS OF LYS-56</scope>
</reference>
<reference key="9">
    <citation type="journal article" date="2015" name="Am. J. Hum. Genet.">
        <title>De novo mutations in SIK1 cause a spectrum of developmental epilepsies.</title>
        <authorList>
            <person name="Hansen J."/>
            <person name="Snow C."/>
            <person name="Tuttle E."/>
            <person name="Ghoneim D.H."/>
            <person name="Yang C.S."/>
            <person name="Spencer A."/>
            <person name="Gunter S.A."/>
            <person name="Smyser C.D."/>
            <person name="Gurnett C.A."/>
            <person name="Shinawi M."/>
            <person name="Dobyns W.B."/>
            <person name="Wheless J."/>
            <person name="Halterman M.W."/>
            <person name="Jansen L.A."/>
            <person name="Paschal B.M."/>
            <person name="Paciorkowski A.R."/>
        </authorList>
    </citation>
    <scope>INVOLVEMENT IN DEE30</scope>
    <scope>VARIANTS DEE30 THR-287; CYS-411 AND SER-636</scope>
    <scope>CHARACTERIZATION OF VARIANTS DEE30 THR-287; CYS-411 AND SER-636</scope>
</reference>
<reference key="10">
    <citation type="journal article" date="2018" name="FEBS J.">
        <title>14-3-3 proteins mediate inhibitory effects of cAMP on salt-inducible kinases (SIKs).</title>
        <authorList>
            <person name="Sonntag T."/>
            <person name="Vaughan J.M."/>
            <person name="Montminy M."/>
        </authorList>
    </citation>
    <scope>FUNCTION</scope>
    <scope>CATALYTIC ACTIVITY</scope>
    <scope>ACTIVITY REGULATION</scope>
    <scope>INTERACTION WITH 14-3-3 PROTEINS</scope>
    <scope>SUBCELLULAR LOCATION</scope>
    <scope>DOMAIN</scope>
    <scope>PTM</scope>
    <scope>MUTAGENESIS OF THR-182; THR-473 AND SER-575</scope>
    <scope>PHOSPHORYLATION AT THR-473 AND SER-575</scope>
</reference>
<reference key="11">
    <citation type="journal article" date="2007" name="Nature">
        <title>Patterns of somatic mutation in human cancer genomes.</title>
        <authorList>
            <person name="Greenman C."/>
            <person name="Stephens P."/>
            <person name="Smith R."/>
            <person name="Dalgliesh G.L."/>
            <person name="Hunter C."/>
            <person name="Bignell G."/>
            <person name="Davies H."/>
            <person name="Teague J."/>
            <person name="Butler A."/>
            <person name="Stevens C."/>
            <person name="Edkins S."/>
            <person name="O'Meara S."/>
            <person name="Vastrik I."/>
            <person name="Schmidt E.E."/>
            <person name="Avis T."/>
            <person name="Barthorpe S."/>
            <person name="Bhamra G."/>
            <person name="Buck G."/>
            <person name="Choudhury B."/>
            <person name="Clements J."/>
            <person name="Cole J."/>
            <person name="Dicks E."/>
            <person name="Forbes S."/>
            <person name="Gray K."/>
            <person name="Halliday K."/>
            <person name="Harrison R."/>
            <person name="Hills K."/>
            <person name="Hinton J."/>
            <person name="Jenkinson A."/>
            <person name="Jones D."/>
            <person name="Menzies A."/>
            <person name="Mironenko T."/>
            <person name="Perry J."/>
            <person name="Raine K."/>
            <person name="Richardson D."/>
            <person name="Shepherd R."/>
            <person name="Small A."/>
            <person name="Tofts C."/>
            <person name="Varian J."/>
            <person name="Webb T."/>
            <person name="West S."/>
            <person name="Widaa S."/>
            <person name="Yates A."/>
            <person name="Cahill D.P."/>
            <person name="Louis D.N."/>
            <person name="Goldstraw P."/>
            <person name="Nicholson A.G."/>
            <person name="Brasseur F."/>
            <person name="Looijenga L."/>
            <person name="Weber B.L."/>
            <person name="Chiew Y.-E."/>
            <person name="DeFazio A."/>
            <person name="Greaves M.F."/>
            <person name="Green A.R."/>
            <person name="Campbell P."/>
            <person name="Birney E."/>
            <person name="Easton D.F."/>
            <person name="Chenevix-Trench G."/>
            <person name="Tan M.-H."/>
            <person name="Khoo S.K."/>
            <person name="Teh B.T."/>
            <person name="Yuen S.T."/>
            <person name="Leung S.Y."/>
            <person name="Wooster R."/>
            <person name="Futreal P.A."/>
            <person name="Stratton M.R."/>
        </authorList>
    </citation>
    <scope>VARIANTS [LARGE SCALE ANALYSIS] SER-15; ASN-142; SER-211; ASP-469; VAL-615; LEU-696 AND VAL-725</scope>
</reference>
<keyword id="KW-0067">ATP-binding</keyword>
<keyword id="KW-0090">Biological rhythms</keyword>
<keyword id="KW-0131">Cell cycle</keyword>
<keyword id="KW-0963">Cytoplasm</keyword>
<keyword id="KW-0217">Developmental protein</keyword>
<keyword id="KW-0221">Differentiation</keyword>
<keyword id="KW-0225">Disease variant</keyword>
<keyword id="KW-0887">Epilepsy</keyword>
<keyword id="KW-0418">Kinase</keyword>
<keyword id="KW-0460">Magnesium</keyword>
<keyword id="KW-0479">Metal-binding</keyword>
<keyword id="KW-0547">Nucleotide-binding</keyword>
<keyword id="KW-0539">Nucleus</keyword>
<keyword id="KW-0597">Phosphoprotein</keyword>
<keyword id="KW-1267">Proteomics identification</keyword>
<keyword id="KW-1185">Reference proteome</keyword>
<keyword id="KW-0723">Serine/threonine-protein kinase</keyword>
<keyword id="KW-0808">Transferase</keyword>
<keyword id="KW-0043">Tumor suppressor</keyword>